<accession>O67619</accession>
<protein>
    <recommendedName>
        <fullName evidence="1">2-dehydropantoate 2-reductase</fullName>
        <ecNumber evidence="1">1.1.1.169</ecNumber>
    </recommendedName>
    <alternativeName>
        <fullName evidence="1">Ketopantoate reductase</fullName>
        <shortName evidence="1">KPR</shortName>
    </alternativeName>
</protein>
<sequence length="310" mass="34776">MVMKFLIVGVGAIGSAYLAFLTRAGHEAAGLVRRNPVNRIKVEGIWGEFEIPVKTFTKVEEVPFIPDIVIISVKSYDTEEALKKVKPVVGENTFIMIAQNGYGNYEKAVEIYGEGKVILSRIIFGSKVIKPGHIRITVSADEVVIGDPSGKIDEEFLKNLARTFTEAGIPTRYERDVYKYLVDKIIYNSALNPLGALFEVNYGSLAENPHTKELMNRVIDEIFQVIEKAKLPCFWKSADEYKKVFYEKLIPPTAEHYPSMLEDVKKGKTEIEALNGAIVELGKKYGVSTPTNEFITKMVKAKELFNLKDT</sequence>
<organism>
    <name type="scientific">Aquifex aeolicus (strain VF5)</name>
    <dbReference type="NCBI Taxonomy" id="224324"/>
    <lineage>
        <taxon>Bacteria</taxon>
        <taxon>Pseudomonadati</taxon>
        <taxon>Aquificota</taxon>
        <taxon>Aquificia</taxon>
        <taxon>Aquificales</taxon>
        <taxon>Aquificaceae</taxon>
        <taxon>Aquifex</taxon>
    </lineage>
</organism>
<comment type="function">
    <text evidence="1">Catalyzes the NADPH-dependent reduction of ketopantoate into pantoic acid.</text>
</comment>
<comment type="catalytic activity">
    <reaction evidence="1">
        <text>(R)-pantoate + NADP(+) = 2-dehydropantoate + NADPH + H(+)</text>
        <dbReference type="Rhea" id="RHEA:16233"/>
        <dbReference type="ChEBI" id="CHEBI:11561"/>
        <dbReference type="ChEBI" id="CHEBI:15378"/>
        <dbReference type="ChEBI" id="CHEBI:15980"/>
        <dbReference type="ChEBI" id="CHEBI:57783"/>
        <dbReference type="ChEBI" id="CHEBI:58349"/>
        <dbReference type="EC" id="1.1.1.169"/>
    </reaction>
</comment>
<comment type="pathway">
    <text evidence="1">Cofactor biosynthesis; (R)-pantothenate biosynthesis; (R)-pantoate from 3-methyl-2-oxobutanoate: step 2/2.</text>
</comment>
<comment type="subcellular location">
    <subcellularLocation>
        <location evidence="1">Cytoplasm</location>
    </subcellularLocation>
</comment>
<comment type="similarity">
    <text evidence="2">Belongs to the ketopantoate reductase family.</text>
</comment>
<name>PANE_AQUAE</name>
<feature type="chain" id="PRO_0000157310" description="2-dehydropantoate 2-reductase">
    <location>
        <begin position="1"/>
        <end position="310"/>
    </location>
</feature>
<feature type="active site" description="Proton donor" evidence="1">
    <location>
        <position position="184"/>
    </location>
</feature>
<feature type="binding site" evidence="1">
    <location>
        <begin position="9"/>
        <end position="14"/>
    </location>
    <ligand>
        <name>NADP(+)</name>
        <dbReference type="ChEBI" id="CHEBI:58349"/>
    </ligand>
</feature>
<feature type="binding site" evidence="1">
    <location>
        <position position="100"/>
    </location>
    <ligand>
        <name>NADP(+)</name>
        <dbReference type="ChEBI" id="CHEBI:58349"/>
    </ligand>
</feature>
<feature type="binding site" evidence="1">
    <location>
        <position position="100"/>
    </location>
    <ligand>
        <name>substrate</name>
    </ligand>
</feature>
<feature type="binding site" evidence="1">
    <location>
        <position position="188"/>
    </location>
    <ligand>
        <name>substrate</name>
    </ligand>
</feature>
<feature type="binding site" evidence="1">
    <location>
        <position position="192"/>
    </location>
    <ligand>
        <name>substrate</name>
    </ligand>
</feature>
<feature type="binding site" evidence="1">
    <location>
        <position position="259"/>
    </location>
    <ligand>
        <name>substrate</name>
    </ligand>
</feature>
<feature type="binding site" evidence="1">
    <location>
        <position position="270"/>
    </location>
    <ligand>
        <name>NADP(+)</name>
        <dbReference type="ChEBI" id="CHEBI:58349"/>
    </ligand>
</feature>
<dbReference type="EC" id="1.1.1.169" evidence="1"/>
<dbReference type="EMBL" id="AE000657">
    <property type="protein sequence ID" value="AAC07585.1"/>
    <property type="molecule type" value="Genomic_DNA"/>
</dbReference>
<dbReference type="PIR" id="A70449">
    <property type="entry name" value="A70449"/>
</dbReference>
<dbReference type="RefSeq" id="NP_214185.1">
    <property type="nucleotide sequence ID" value="NC_000918.1"/>
</dbReference>
<dbReference type="RefSeq" id="WP_010881122.1">
    <property type="nucleotide sequence ID" value="NC_000918.1"/>
</dbReference>
<dbReference type="SMR" id="O67619"/>
<dbReference type="FunCoup" id="O67619">
    <property type="interactions" value="272"/>
</dbReference>
<dbReference type="STRING" id="224324.aq_1727"/>
<dbReference type="EnsemblBacteria" id="AAC07585">
    <property type="protein sequence ID" value="AAC07585"/>
    <property type="gene ID" value="aq_1727"/>
</dbReference>
<dbReference type="KEGG" id="aae:aq_1727"/>
<dbReference type="PATRIC" id="fig|224324.8.peg.1327"/>
<dbReference type="eggNOG" id="COG1893">
    <property type="taxonomic scope" value="Bacteria"/>
</dbReference>
<dbReference type="HOGENOM" id="CLU_031468_0_0_0"/>
<dbReference type="InParanoid" id="O67619"/>
<dbReference type="OrthoDB" id="9793586at2"/>
<dbReference type="UniPathway" id="UPA00028">
    <property type="reaction ID" value="UER00004"/>
</dbReference>
<dbReference type="Proteomes" id="UP000000798">
    <property type="component" value="Chromosome"/>
</dbReference>
<dbReference type="GO" id="GO:0005737">
    <property type="term" value="C:cytoplasm"/>
    <property type="evidence" value="ECO:0000318"/>
    <property type="project" value="GO_Central"/>
</dbReference>
<dbReference type="GO" id="GO:0008677">
    <property type="term" value="F:2-dehydropantoate 2-reductase activity"/>
    <property type="evidence" value="ECO:0000318"/>
    <property type="project" value="GO_Central"/>
</dbReference>
<dbReference type="GO" id="GO:0050661">
    <property type="term" value="F:NADP binding"/>
    <property type="evidence" value="ECO:0000318"/>
    <property type="project" value="GO_Central"/>
</dbReference>
<dbReference type="GO" id="GO:0015940">
    <property type="term" value="P:pantothenate biosynthetic process"/>
    <property type="evidence" value="ECO:0007669"/>
    <property type="project" value="UniProtKB-UniPathway"/>
</dbReference>
<dbReference type="FunFam" id="3.40.50.720:FF:000307">
    <property type="entry name" value="2-dehydropantoate 2-reductase"/>
    <property type="match status" value="1"/>
</dbReference>
<dbReference type="Gene3D" id="1.10.1040.10">
    <property type="entry name" value="N-(1-d-carboxylethyl)-l-norvaline Dehydrogenase, domain 2"/>
    <property type="match status" value="1"/>
</dbReference>
<dbReference type="Gene3D" id="3.40.50.720">
    <property type="entry name" value="NAD(P)-binding Rossmann-like Domain"/>
    <property type="match status" value="1"/>
</dbReference>
<dbReference type="InterPro" id="IPR008927">
    <property type="entry name" value="6-PGluconate_DH-like_C_sf"/>
</dbReference>
<dbReference type="InterPro" id="IPR013328">
    <property type="entry name" value="6PGD_dom2"/>
</dbReference>
<dbReference type="InterPro" id="IPR003710">
    <property type="entry name" value="ApbA"/>
</dbReference>
<dbReference type="InterPro" id="IPR050838">
    <property type="entry name" value="Ketopantoate_reductase"/>
</dbReference>
<dbReference type="InterPro" id="IPR013752">
    <property type="entry name" value="KPA_reductase"/>
</dbReference>
<dbReference type="InterPro" id="IPR013332">
    <property type="entry name" value="KPR_N"/>
</dbReference>
<dbReference type="InterPro" id="IPR036291">
    <property type="entry name" value="NAD(P)-bd_dom_sf"/>
</dbReference>
<dbReference type="NCBIfam" id="TIGR00745">
    <property type="entry name" value="apbA_panE"/>
    <property type="match status" value="1"/>
</dbReference>
<dbReference type="PANTHER" id="PTHR43765:SF2">
    <property type="entry name" value="2-DEHYDROPANTOATE 2-REDUCTASE"/>
    <property type="match status" value="1"/>
</dbReference>
<dbReference type="PANTHER" id="PTHR43765">
    <property type="entry name" value="2-DEHYDROPANTOATE 2-REDUCTASE-RELATED"/>
    <property type="match status" value="1"/>
</dbReference>
<dbReference type="Pfam" id="PF02558">
    <property type="entry name" value="ApbA"/>
    <property type="match status" value="1"/>
</dbReference>
<dbReference type="Pfam" id="PF08546">
    <property type="entry name" value="ApbA_C"/>
    <property type="match status" value="1"/>
</dbReference>
<dbReference type="SUPFAM" id="SSF48179">
    <property type="entry name" value="6-phosphogluconate dehydrogenase C-terminal domain-like"/>
    <property type="match status" value="1"/>
</dbReference>
<dbReference type="SUPFAM" id="SSF51735">
    <property type="entry name" value="NAD(P)-binding Rossmann-fold domains"/>
    <property type="match status" value="1"/>
</dbReference>
<keyword id="KW-0963">Cytoplasm</keyword>
<keyword id="KW-0521">NADP</keyword>
<keyword id="KW-0560">Oxidoreductase</keyword>
<keyword id="KW-0566">Pantothenate biosynthesis</keyword>
<keyword id="KW-1185">Reference proteome</keyword>
<proteinExistence type="inferred from homology"/>
<gene>
    <name type="ordered locus">aq_1727</name>
</gene>
<evidence type="ECO:0000250" key="1">
    <source>
        <dbReference type="UniProtKB" id="P0A9J4"/>
    </source>
</evidence>
<evidence type="ECO:0000305" key="2"/>
<reference key="1">
    <citation type="journal article" date="1998" name="Nature">
        <title>The complete genome of the hyperthermophilic bacterium Aquifex aeolicus.</title>
        <authorList>
            <person name="Deckert G."/>
            <person name="Warren P.V."/>
            <person name="Gaasterland T."/>
            <person name="Young W.G."/>
            <person name="Lenox A.L."/>
            <person name="Graham D.E."/>
            <person name="Overbeek R."/>
            <person name="Snead M.A."/>
            <person name="Keller M."/>
            <person name="Aujay M."/>
            <person name="Huber R."/>
            <person name="Feldman R.A."/>
            <person name="Short J.M."/>
            <person name="Olsen G.J."/>
            <person name="Swanson R.V."/>
        </authorList>
    </citation>
    <scope>NUCLEOTIDE SEQUENCE [LARGE SCALE GENOMIC DNA]</scope>
    <source>
        <strain>VF5</strain>
    </source>
</reference>